<keyword id="KW-0002">3D-structure</keyword>
<keyword id="KW-0938">Abscisic acid signaling pathway</keyword>
<keyword id="KW-0963">Cytoplasm</keyword>
<keyword id="KW-0378">Hydrolase</keyword>
<keyword id="KW-0460">Magnesium</keyword>
<keyword id="KW-0464">Manganese</keyword>
<keyword id="KW-0479">Metal-binding</keyword>
<keyword id="KW-0539">Nucleus</keyword>
<keyword id="KW-0904">Protein phosphatase</keyword>
<keyword id="KW-1185">Reference proteome</keyword>
<protein>
    <recommendedName>
        <fullName evidence="9">Probable protein phosphatase 2C 6</fullName>
        <shortName evidence="7">OsPP2C06</shortName>
        <ecNumber evidence="9">3.1.3.16</ecNumber>
    </recommendedName>
    <alternativeName>
        <fullName evidence="9">ABI1-like protein 1</fullName>
        <shortName evidence="8">OsABI-LIKE1</shortName>
        <shortName evidence="8">OsABIL1</shortName>
    </alternativeName>
</protein>
<organism>
    <name type="scientific">Oryza sativa subsp. japonica</name>
    <name type="common">Rice</name>
    <dbReference type="NCBI Taxonomy" id="39947"/>
    <lineage>
        <taxon>Eukaryota</taxon>
        <taxon>Viridiplantae</taxon>
        <taxon>Streptophyta</taxon>
        <taxon>Embryophyta</taxon>
        <taxon>Tracheophyta</taxon>
        <taxon>Spermatophyta</taxon>
        <taxon>Magnoliopsida</taxon>
        <taxon>Liliopsida</taxon>
        <taxon>Poales</taxon>
        <taxon>Poaceae</taxon>
        <taxon>BOP clade</taxon>
        <taxon>Oryzoideae</taxon>
        <taxon>Oryzeae</taxon>
        <taxon>Oryzinae</taxon>
        <taxon>Oryza</taxon>
        <taxon>Oryza sativa</taxon>
    </lineage>
</organism>
<evidence type="ECO:0000250" key="1"/>
<evidence type="ECO:0000250" key="2">
    <source>
        <dbReference type="UniProtKB" id="Q6L4R7"/>
    </source>
</evidence>
<evidence type="ECO:0000255" key="3">
    <source>
        <dbReference type="PROSITE-ProRule" id="PRU01082"/>
    </source>
</evidence>
<evidence type="ECO:0000256" key="4">
    <source>
        <dbReference type="SAM" id="MobiDB-lite"/>
    </source>
</evidence>
<evidence type="ECO:0000269" key="5">
    <source>
    </source>
</evidence>
<evidence type="ECO:0000269" key="6">
    <source>
    </source>
</evidence>
<evidence type="ECO:0000303" key="7">
    <source>
    </source>
</evidence>
<evidence type="ECO:0000303" key="8">
    <source>
    </source>
</evidence>
<evidence type="ECO:0000305" key="9"/>
<evidence type="ECO:0000312" key="10">
    <source>
        <dbReference type="EMBL" id="BAS72874.1"/>
    </source>
</evidence>
<evidence type="ECO:0007829" key="11">
    <source>
        <dbReference type="PDB" id="4OIC"/>
    </source>
</evidence>
<comment type="function">
    <text evidence="2">Probable protein phosphatase that may function in abscisic acid (ABA) signaling.</text>
</comment>
<comment type="catalytic activity">
    <reaction evidence="9">
        <text>O-phospho-L-seryl-[protein] + H2O = L-seryl-[protein] + phosphate</text>
        <dbReference type="Rhea" id="RHEA:20629"/>
        <dbReference type="Rhea" id="RHEA-COMP:9863"/>
        <dbReference type="Rhea" id="RHEA-COMP:11604"/>
        <dbReference type="ChEBI" id="CHEBI:15377"/>
        <dbReference type="ChEBI" id="CHEBI:29999"/>
        <dbReference type="ChEBI" id="CHEBI:43474"/>
        <dbReference type="ChEBI" id="CHEBI:83421"/>
        <dbReference type="EC" id="3.1.3.16"/>
    </reaction>
</comment>
<comment type="catalytic activity">
    <reaction evidence="9">
        <text>O-phospho-L-threonyl-[protein] + H2O = L-threonyl-[protein] + phosphate</text>
        <dbReference type="Rhea" id="RHEA:47004"/>
        <dbReference type="Rhea" id="RHEA-COMP:11060"/>
        <dbReference type="Rhea" id="RHEA-COMP:11605"/>
        <dbReference type="ChEBI" id="CHEBI:15377"/>
        <dbReference type="ChEBI" id="CHEBI:30013"/>
        <dbReference type="ChEBI" id="CHEBI:43474"/>
        <dbReference type="ChEBI" id="CHEBI:61977"/>
        <dbReference type="EC" id="3.1.3.16"/>
    </reaction>
</comment>
<comment type="cofactor">
    <cofactor evidence="1">
        <name>Mg(2+)</name>
        <dbReference type="ChEBI" id="CHEBI:18420"/>
    </cofactor>
    <cofactor evidence="1">
        <name>Mn(2+)</name>
        <dbReference type="ChEBI" id="CHEBI:29035"/>
    </cofactor>
    <text evidence="1">Binds 2 magnesium or manganese ions per subunit.</text>
</comment>
<comment type="subunit">
    <text evidence="5">Interacts with PYL9.</text>
</comment>
<comment type="subcellular location">
    <subcellularLocation>
        <location evidence="6">Nucleus</location>
    </subcellularLocation>
    <subcellularLocation>
        <location evidence="6">Cytoplasm</location>
        <location evidence="6">Cytosol</location>
    </subcellularLocation>
    <text evidence="6">Localizes predominantly in nucleus.</text>
</comment>
<comment type="induction">
    <text evidence="6">Induced by abscisic acid (ABA).</text>
</comment>
<comment type="miscellaneous">
    <text evidence="6">Plants overexpressing PP2C06 exhibit dramatically reduced fertility and severe pre-harvest sprouting.</text>
</comment>
<comment type="similarity">
    <text evidence="9">Belongs to the PP2C family.</text>
</comment>
<comment type="sequence caution" evidence="9">
    <conflict type="erroneous gene model prediction">
        <sequence resource="EMBL-CDS" id="BAF05329"/>
    </conflict>
</comment>
<comment type="sequence caution" evidence="9">
    <conflict type="erroneous initiation">
        <sequence resource="EMBL-CDS" id="BAS72874"/>
    </conflict>
    <text>Truncated N-terminus.</text>
</comment>
<accession>Q0JLP9</accession>
<accession>A0A0P0V4J5</accession>
<name>P2C06_ORYSJ</name>
<sequence>MEDVAVAAALAPAPATAPVFSPAAAGLTLIAAAAADPIAAVVAGAMDGVVTVPPVRTASAVEDDAVAPGRGEEGGEASAVGSPCSVTSDCSSVASADFEGVGLGFFGAAADGGAAMVFEDSAASAATVEAEARVAAGARSVFAVECVPLWGHKSICGRRPEMEDAVVAVSRFFDIPLWMLTGNSVVDGLDPMSFRLPAHFFGVYDGHGGAQVANYCRERLHAALVEELSRIEGSVSGANLGSVEFKKKWEQAFVDCFSRVDEEVGGNASRGEAVAPETVGSTAVVAVICSSHIIVANCGDSRAVLCRGKQPVPLSVDHKPNREDEYARIEAEGGKVIQWNGYRVFGVLAMSRSIGDRYLKPWIIPVPEITIVPRAKDDECLVLASDGLWDVMSNEEVCDVARKRILLWHKKNGTNPASAPRSGDSSDPAAEAAAECLSKLALQKGSKDNISVIVVDLKAHRKFKSKS</sequence>
<gene>
    <name evidence="7" type="primary">PP2C06</name>
    <name evidence="8" type="synonym">ABIL1</name>
    <name evidence="10" type="ordered locus">Os01g0583100</name>
    <name evidence="9" type="ordered locus">LOC_Os01g40094</name>
</gene>
<dbReference type="EC" id="3.1.3.16" evidence="9"/>
<dbReference type="EMBL" id="AP008207">
    <property type="protein sequence ID" value="BAF05329.2"/>
    <property type="status" value="ALT_SEQ"/>
    <property type="molecule type" value="Genomic_DNA"/>
</dbReference>
<dbReference type="EMBL" id="AP014957">
    <property type="protein sequence ID" value="BAS72874.1"/>
    <property type="status" value="ALT_INIT"/>
    <property type="molecule type" value="Genomic_DNA"/>
</dbReference>
<dbReference type="EMBL" id="AK242616">
    <property type="status" value="NOT_ANNOTATED_CDS"/>
    <property type="molecule type" value="mRNA"/>
</dbReference>
<dbReference type="RefSeq" id="XP_015621667.1">
    <property type="nucleotide sequence ID" value="XM_015766181.1"/>
</dbReference>
<dbReference type="PDB" id="4OIC">
    <property type="method" value="X-ray"/>
    <property type="resolution" value="2.00 A"/>
    <property type="chains" value="B=1-467"/>
</dbReference>
<dbReference type="PDBsum" id="4OIC"/>
<dbReference type="SMR" id="Q0JLP9"/>
<dbReference type="BioGRID" id="793238">
    <property type="interactions" value="1"/>
</dbReference>
<dbReference type="FunCoup" id="Q0JLP9">
    <property type="interactions" value="349"/>
</dbReference>
<dbReference type="STRING" id="39947.Q0JLP9"/>
<dbReference type="PaxDb" id="39947-Q0JLP9"/>
<dbReference type="KEGG" id="dosa:Os01g0583100"/>
<dbReference type="eggNOG" id="KOG0698">
    <property type="taxonomic scope" value="Eukaryota"/>
</dbReference>
<dbReference type="HOGENOM" id="CLU_013173_20_4_1"/>
<dbReference type="InParanoid" id="Q0JLP9"/>
<dbReference type="OrthoDB" id="10264738at2759"/>
<dbReference type="EvolutionaryTrace" id="Q0JLP9"/>
<dbReference type="Proteomes" id="UP000000763">
    <property type="component" value="Chromosome 1"/>
</dbReference>
<dbReference type="Proteomes" id="UP000059680">
    <property type="component" value="Chromosome 1"/>
</dbReference>
<dbReference type="GO" id="GO:0005829">
    <property type="term" value="C:cytosol"/>
    <property type="evidence" value="ECO:0000314"/>
    <property type="project" value="UniProtKB"/>
</dbReference>
<dbReference type="GO" id="GO:0005634">
    <property type="term" value="C:nucleus"/>
    <property type="evidence" value="ECO:0000314"/>
    <property type="project" value="UniProtKB"/>
</dbReference>
<dbReference type="GO" id="GO:0046872">
    <property type="term" value="F:metal ion binding"/>
    <property type="evidence" value="ECO:0007669"/>
    <property type="project" value="UniProtKB-KW"/>
</dbReference>
<dbReference type="GO" id="GO:0004722">
    <property type="term" value="F:protein serine/threonine phosphatase activity"/>
    <property type="evidence" value="ECO:0000318"/>
    <property type="project" value="GO_Central"/>
</dbReference>
<dbReference type="GO" id="GO:0009738">
    <property type="term" value="P:abscisic acid-activated signaling pathway"/>
    <property type="evidence" value="ECO:0007669"/>
    <property type="project" value="UniProtKB-KW"/>
</dbReference>
<dbReference type="GO" id="GO:1902531">
    <property type="term" value="P:regulation of intracellular signal transduction"/>
    <property type="evidence" value="ECO:0000318"/>
    <property type="project" value="GO_Central"/>
</dbReference>
<dbReference type="CDD" id="cd00143">
    <property type="entry name" value="PP2Cc"/>
    <property type="match status" value="1"/>
</dbReference>
<dbReference type="FunFam" id="3.60.40.10:FF:000025">
    <property type="entry name" value="Protein phosphatase 2C 16"/>
    <property type="match status" value="1"/>
</dbReference>
<dbReference type="Gene3D" id="3.60.40.10">
    <property type="entry name" value="PPM-type phosphatase domain"/>
    <property type="match status" value="1"/>
</dbReference>
<dbReference type="InterPro" id="IPR015655">
    <property type="entry name" value="PP2C"/>
</dbReference>
<dbReference type="InterPro" id="IPR000222">
    <property type="entry name" value="PP2C_BS"/>
</dbReference>
<dbReference type="InterPro" id="IPR036457">
    <property type="entry name" value="PPM-type-like_dom_sf"/>
</dbReference>
<dbReference type="InterPro" id="IPR001932">
    <property type="entry name" value="PPM-type_phosphatase-like_dom"/>
</dbReference>
<dbReference type="PANTHER" id="PTHR47992">
    <property type="entry name" value="PROTEIN PHOSPHATASE"/>
    <property type="match status" value="1"/>
</dbReference>
<dbReference type="Pfam" id="PF00481">
    <property type="entry name" value="PP2C"/>
    <property type="match status" value="1"/>
</dbReference>
<dbReference type="SMART" id="SM00331">
    <property type="entry name" value="PP2C_SIG"/>
    <property type="match status" value="1"/>
</dbReference>
<dbReference type="SMART" id="SM00332">
    <property type="entry name" value="PP2Cc"/>
    <property type="match status" value="1"/>
</dbReference>
<dbReference type="SUPFAM" id="SSF81606">
    <property type="entry name" value="PP2C-like"/>
    <property type="match status" value="1"/>
</dbReference>
<dbReference type="PROSITE" id="PS01032">
    <property type="entry name" value="PPM_1"/>
    <property type="match status" value="1"/>
</dbReference>
<dbReference type="PROSITE" id="PS51746">
    <property type="entry name" value="PPM_2"/>
    <property type="match status" value="1"/>
</dbReference>
<feature type="chain" id="PRO_0000363252" description="Probable protein phosphatase 2C 6">
    <location>
        <begin position="1"/>
        <end position="467"/>
    </location>
</feature>
<feature type="domain" description="PPM-type phosphatase" evidence="3">
    <location>
        <begin position="149"/>
        <end position="457"/>
    </location>
</feature>
<feature type="region of interest" description="Disordered" evidence="4">
    <location>
        <begin position="61"/>
        <end position="81"/>
    </location>
</feature>
<feature type="binding site" evidence="1">
    <location>
        <position position="205"/>
    </location>
    <ligand>
        <name>Mn(2+)</name>
        <dbReference type="ChEBI" id="CHEBI:29035"/>
        <label>1</label>
    </ligand>
</feature>
<feature type="binding site" evidence="1">
    <location>
        <position position="205"/>
    </location>
    <ligand>
        <name>Mn(2+)</name>
        <dbReference type="ChEBI" id="CHEBI:29035"/>
        <label>2</label>
    </ligand>
</feature>
<feature type="binding site" evidence="1">
    <location>
        <position position="206"/>
    </location>
    <ligand>
        <name>Mn(2+)</name>
        <dbReference type="ChEBI" id="CHEBI:29035"/>
        <label>1</label>
    </ligand>
</feature>
<feature type="binding site" evidence="1">
    <location>
        <position position="386"/>
    </location>
    <ligand>
        <name>Mn(2+)</name>
        <dbReference type="ChEBI" id="CHEBI:29035"/>
        <label>2</label>
    </ligand>
</feature>
<feature type="binding site" evidence="1">
    <location>
        <position position="448"/>
    </location>
    <ligand>
        <name>Mn(2+)</name>
        <dbReference type="ChEBI" id="CHEBI:29035"/>
        <label>2</label>
    </ligand>
</feature>
<feature type="strand" evidence="11">
    <location>
        <begin position="142"/>
        <end position="144"/>
    </location>
</feature>
<feature type="strand" evidence="11">
    <location>
        <begin position="149"/>
        <end position="155"/>
    </location>
</feature>
<feature type="strand" evidence="11">
    <location>
        <begin position="159"/>
        <end position="161"/>
    </location>
</feature>
<feature type="strand" evidence="11">
    <location>
        <begin position="164"/>
        <end position="176"/>
    </location>
</feature>
<feature type="helix" evidence="11">
    <location>
        <begin position="178"/>
        <end position="181"/>
    </location>
</feature>
<feature type="turn" evidence="11">
    <location>
        <begin position="191"/>
        <end position="193"/>
    </location>
</feature>
<feature type="strand" evidence="11">
    <location>
        <begin position="195"/>
        <end position="210"/>
    </location>
</feature>
<feature type="helix" evidence="11">
    <location>
        <begin position="211"/>
        <end position="234"/>
    </location>
</feature>
<feature type="helix" evidence="11">
    <location>
        <begin position="239"/>
        <end position="241"/>
    </location>
</feature>
<feature type="helix" evidence="11">
    <location>
        <begin position="245"/>
        <end position="264"/>
    </location>
</feature>
<feature type="strand" evidence="11">
    <location>
        <begin position="280"/>
        <end position="288"/>
    </location>
</feature>
<feature type="strand" evidence="11">
    <location>
        <begin position="290"/>
        <end position="300"/>
    </location>
</feature>
<feature type="strand" evidence="11">
    <location>
        <begin position="302"/>
        <end position="307"/>
    </location>
</feature>
<feature type="strand" evidence="11">
    <location>
        <begin position="310"/>
        <end position="313"/>
    </location>
</feature>
<feature type="helix" evidence="11">
    <location>
        <begin position="323"/>
        <end position="331"/>
    </location>
</feature>
<feature type="strand" evidence="11">
    <location>
        <begin position="336"/>
        <end position="344"/>
    </location>
</feature>
<feature type="turn" evidence="11">
    <location>
        <begin position="345"/>
        <end position="347"/>
    </location>
</feature>
<feature type="helix" evidence="11">
    <location>
        <begin position="357"/>
        <end position="359"/>
    </location>
</feature>
<feature type="turn" evidence="11">
    <location>
        <begin position="360"/>
        <end position="362"/>
    </location>
</feature>
<feature type="strand" evidence="11">
    <location>
        <begin position="368"/>
        <end position="373"/>
    </location>
</feature>
<feature type="strand" evidence="11">
    <location>
        <begin position="378"/>
        <end position="384"/>
    </location>
</feature>
<feature type="helix" evidence="11">
    <location>
        <begin position="386"/>
        <end position="389"/>
    </location>
</feature>
<feature type="helix" evidence="11">
    <location>
        <begin position="394"/>
        <end position="411"/>
    </location>
</feature>
<feature type="helix" evidence="11">
    <location>
        <begin position="428"/>
        <end position="443"/>
    </location>
</feature>
<feature type="strand" evidence="11">
    <location>
        <begin position="450"/>
        <end position="456"/>
    </location>
</feature>
<proteinExistence type="evidence at protein level"/>
<reference key="1">
    <citation type="journal article" date="2005" name="Nature">
        <title>The map-based sequence of the rice genome.</title>
        <authorList>
            <consortium name="International rice genome sequencing project (IRGSP)"/>
        </authorList>
    </citation>
    <scope>NUCLEOTIDE SEQUENCE [LARGE SCALE GENOMIC DNA]</scope>
    <source>
        <strain>cv. Nipponbare</strain>
    </source>
</reference>
<reference key="2">
    <citation type="journal article" date="2008" name="Nucleic Acids Res.">
        <title>The rice annotation project database (RAP-DB): 2008 update.</title>
        <authorList>
            <consortium name="The rice annotation project (RAP)"/>
        </authorList>
    </citation>
    <scope>GENOME REANNOTATION</scope>
    <source>
        <strain>cv. Nipponbare</strain>
    </source>
</reference>
<reference key="3">
    <citation type="journal article" date="2013" name="Rice">
        <title>Improvement of the Oryza sativa Nipponbare reference genome using next generation sequence and optical map data.</title>
        <authorList>
            <person name="Kawahara Y."/>
            <person name="de la Bastide M."/>
            <person name="Hamilton J.P."/>
            <person name="Kanamori H."/>
            <person name="McCombie W.R."/>
            <person name="Ouyang S."/>
            <person name="Schwartz D.C."/>
            <person name="Tanaka T."/>
            <person name="Wu J."/>
            <person name="Zhou S."/>
            <person name="Childs K.L."/>
            <person name="Davidson R.M."/>
            <person name="Lin H."/>
            <person name="Quesada-Ocampo L."/>
            <person name="Vaillancourt B."/>
            <person name="Sakai H."/>
            <person name="Lee S.S."/>
            <person name="Kim J."/>
            <person name="Numa H."/>
            <person name="Itoh T."/>
            <person name="Buell C.R."/>
            <person name="Matsumoto T."/>
        </authorList>
    </citation>
    <scope>GENOME REANNOTATION</scope>
    <source>
        <strain>cv. Nipponbare</strain>
    </source>
</reference>
<reference key="4">
    <citation type="submission" date="2006-10" db="EMBL/GenBank/DDBJ databases">
        <title>Oryza sativa full length cDNA.</title>
        <authorList>
            <consortium name="The rice full-length cDNA consortium"/>
        </authorList>
    </citation>
    <scope>NUCLEOTIDE SEQUENCE [LARGE SCALE MRNA] OF 72-467</scope>
    <source>
        <strain>cv. Nipponbare</strain>
    </source>
</reference>
<reference key="5">
    <citation type="journal article" date="2008" name="BMC Genomics">
        <title>Genome-wide and expression analysis of protein phosphatase 2C in rice and Arabidopsis.</title>
        <authorList>
            <person name="Xue T."/>
            <person name="Wang D."/>
            <person name="Zhang S."/>
            <person name="Ehlting J."/>
            <person name="Ni F."/>
            <person name="Jacab S."/>
            <person name="Zheng C."/>
            <person name="Zhong Y."/>
        </authorList>
    </citation>
    <scope>GENE FAMILY</scope>
    <scope>NOMENCLATURE</scope>
</reference>
<reference key="6">
    <citation type="journal article" date="2015" name="Plant Cell Physiol.">
        <title>ABA regulates subcellular redistribution of OsABI-LIKE2, a negative regulator in ABA signaling, to control root architecture and drought resistance in Oryza sativa.</title>
        <authorList>
            <person name="Li C."/>
            <person name="Shen H."/>
            <person name="Wang T."/>
            <person name="Wang X."/>
        </authorList>
    </citation>
    <scope>SUBCELLULAR LOCATION</scope>
    <scope>INDUCTION BY ABSCISIC ACID</scope>
</reference>
<reference key="7">
    <citation type="journal article" date="2014" name="PLoS ONE">
        <title>Identification and characterization of ABA receptors in Oryza sativa.</title>
        <authorList>
            <person name="He Y."/>
            <person name="Hao Q."/>
            <person name="Li W."/>
            <person name="Yan C."/>
            <person name="Yan N."/>
            <person name="Yin P."/>
        </authorList>
    </citation>
    <scope>X-RAY CRYSTALLOGRAPHY (2.00 ANGSTROMS)</scope>
    <scope>INTERACTION WITH PYL9</scope>
</reference>